<gene>
    <name type="primary">PRP1</name>
</gene>
<comment type="catalytic activity">
    <reaction>
        <text>RX + glutathione = an S-substituted glutathione + a halide anion + H(+)</text>
        <dbReference type="Rhea" id="RHEA:16437"/>
        <dbReference type="ChEBI" id="CHEBI:15378"/>
        <dbReference type="ChEBI" id="CHEBI:16042"/>
        <dbReference type="ChEBI" id="CHEBI:17792"/>
        <dbReference type="ChEBI" id="CHEBI:57925"/>
        <dbReference type="ChEBI" id="CHEBI:90779"/>
        <dbReference type="EC" id="2.5.1.18"/>
    </reaction>
</comment>
<comment type="induction">
    <text>By fungal infection.</text>
</comment>
<comment type="similarity">
    <text evidence="2">Belongs to the GST superfamily. HSP26 family.</text>
</comment>
<keyword id="KW-0568">Pathogenesis-related protein</keyword>
<keyword id="KW-0611">Plant defense</keyword>
<keyword id="KW-1185">Reference proteome</keyword>
<keyword id="KW-0808">Transferase</keyword>
<organism>
    <name type="scientific">Solanum tuberosum</name>
    <name type="common">Potato</name>
    <dbReference type="NCBI Taxonomy" id="4113"/>
    <lineage>
        <taxon>Eukaryota</taxon>
        <taxon>Viridiplantae</taxon>
        <taxon>Streptophyta</taxon>
        <taxon>Embryophyta</taxon>
        <taxon>Tracheophyta</taxon>
        <taxon>Spermatophyta</taxon>
        <taxon>Magnoliopsida</taxon>
        <taxon>eudicotyledons</taxon>
        <taxon>Gunneridae</taxon>
        <taxon>Pentapetalae</taxon>
        <taxon>asterids</taxon>
        <taxon>lamiids</taxon>
        <taxon>Solanales</taxon>
        <taxon>Solanaceae</taxon>
        <taxon>Solanoideae</taxon>
        <taxon>Solaneae</taxon>
        <taxon>Solanum</taxon>
    </lineage>
</organism>
<feature type="chain" id="PRO_0000185872" description="Probable glutathione S-transferase">
    <location>
        <begin position="1"/>
        <end position="217"/>
    </location>
</feature>
<feature type="domain" description="GST N-terminal">
    <location>
        <begin position="2"/>
        <end position="81"/>
    </location>
</feature>
<feature type="domain" description="GST C-terminal">
    <location>
        <begin position="86"/>
        <end position="210"/>
    </location>
</feature>
<feature type="binding site" evidence="1">
    <location>
        <position position="12"/>
    </location>
    <ligand>
        <name>glutathione</name>
        <dbReference type="ChEBI" id="CHEBI:57925"/>
    </ligand>
</feature>
<feature type="binding site" evidence="1">
    <location>
        <position position="39"/>
    </location>
    <ligand>
        <name>glutathione</name>
        <dbReference type="ChEBI" id="CHEBI:57925"/>
    </ligand>
</feature>
<feature type="binding site" evidence="1">
    <location>
        <position position="53"/>
    </location>
    <ligand>
        <name>glutathione</name>
        <dbReference type="ChEBI" id="CHEBI:57925"/>
    </ligand>
</feature>
<feature type="binding site" evidence="1">
    <location>
        <begin position="65"/>
        <end position="66"/>
    </location>
    <ligand>
        <name>glutathione</name>
        <dbReference type="ChEBI" id="CHEBI:57925"/>
    </ligand>
</feature>
<evidence type="ECO:0000250" key="1"/>
<evidence type="ECO:0000305" key="2"/>
<proteinExistence type="evidence at transcript level"/>
<name>GSTX1_SOLTU</name>
<reference key="1">
    <citation type="journal article" date="1990" name="Mol. Plant Microbe Interact.">
        <title>Structural analysis and activation by fungal infection of a gene encoding a pathogenesis-related protein in potato.</title>
        <authorList>
            <person name="Taylor J.L."/>
            <person name="Fritzemeier K.H."/>
            <person name="Haeuser I."/>
            <person name="Kombrink E."/>
            <person name="Rohwer F."/>
            <person name="Schroeder M."/>
            <person name="Strittmatter G."/>
            <person name="Hahlbrock K."/>
        </authorList>
    </citation>
    <scope>NUCLEOTIDE SEQUENCE [GENOMIC DNA]</scope>
</reference>
<dbReference type="EC" id="2.5.1.18"/>
<dbReference type="EMBL" id="J03679">
    <property type="protein sequence ID" value="AAA68430.1"/>
    <property type="molecule type" value="Genomic_DNA"/>
</dbReference>
<dbReference type="PIR" id="T07595">
    <property type="entry name" value="T07595"/>
</dbReference>
<dbReference type="SMR" id="P32111"/>
<dbReference type="STRING" id="4113.P32111"/>
<dbReference type="PaxDb" id="4113-PGSC0003DMT400005544"/>
<dbReference type="eggNOG" id="KOG0406">
    <property type="taxonomic scope" value="Eukaryota"/>
</dbReference>
<dbReference type="InParanoid" id="P32111"/>
<dbReference type="Proteomes" id="UP000011115">
    <property type="component" value="Unassembled WGS sequence"/>
</dbReference>
<dbReference type="ExpressionAtlas" id="P32111">
    <property type="expression patterns" value="differential"/>
</dbReference>
<dbReference type="GO" id="GO:0005737">
    <property type="term" value="C:cytoplasm"/>
    <property type="evidence" value="ECO:0000318"/>
    <property type="project" value="GO_Central"/>
</dbReference>
<dbReference type="GO" id="GO:0004364">
    <property type="term" value="F:glutathione transferase activity"/>
    <property type="evidence" value="ECO:0000318"/>
    <property type="project" value="GO_Central"/>
</dbReference>
<dbReference type="GO" id="GO:0006952">
    <property type="term" value="P:defense response"/>
    <property type="evidence" value="ECO:0007669"/>
    <property type="project" value="UniProtKB-KW"/>
</dbReference>
<dbReference type="GO" id="GO:0006749">
    <property type="term" value="P:glutathione metabolic process"/>
    <property type="evidence" value="ECO:0000318"/>
    <property type="project" value="GO_Central"/>
</dbReference>
<dbReference type="CDD" id="cd03185">
    <property type="entry name" value="GST_C_Tau"/>
    <property type="match status" value="1"/>
</dbReference>
<dbReference type="CDD" id="cd03058">
    <property type="entry name" value="GST_N_Tau"/>
    <property type="match status" value="1"/>
</dbReference>
<dbReference type="FunFam" id="1.20.1050.10:FF:000012">
    <property type="entry name" value="Tau class glutathione S-transferase"/>
    <property type="match status" value="1"/>
</dbReference>
<dbReference type="FunFam" id="3.40.30.10:FF:000014">
    <property type="entry name" value="Tau class glutathione S-transferase"/>
    <property type="match status" value="1"/>
</dbReference>
<dbReference type="Gene3D" id="1.20.1050.10">
    <property type="match status" value="1"/>
</dbReference>
<dbReference type="Gene3D" id="3.40.30.10">
    <property type="entry name" value="Glutaredoxin"/>
    <property type="match status" value="1"/>
</dbReference>
<dbReference type="InterPro" id="IPR010987">
    <property type="entry name" value="Glutathione-S-Trfase_C-like"/>
</dbReference>
<dbReference type="InterPro" id="IPR036282">
    <property type="entry name" value="Glutathione-S-Trfase_C_sf"/>
</dbReference>
<dbReference type="InterPro" id="IPR004045">
    <property type="entry name" value="Glutathione_S-Trfase_N"/>
</dbReference>
<dbReference type="InterPro" id="IPR004046">
    <property type="entry name" value="GST_C"/>
</dbReference>
<dbReference type="InterPro" id="IPR045074">
    <property type="entry name" value="GST_C_Tau"/>
</dbReference>
<dbReference type="InterPro" id="IPR045073">
    <property type="entry name" value="Omega/Tau-like"/>
</dbReference>
<dbReference type="InterPro" id="IPR036249">
    <property type="entry name" value="Thioredoxin-like_sf"/>
</dbReference>
<dbReference type="PANTHER" id="PTHR11260">
    <property type="entry name" value="GLUTATHIONE S-TRANSFERASE, GST, SUPERFAMILY, GST DOMAIN CONTAINING"/>
    <property type="match status" value="1"/>
</dbReference>
<dbReference type="PANTHER" id="PTHR11260:SF672">
    <property type="entry name" value="GLUTATHIONE S-TRANSFERASE-RELATED"/>
    <property type="match status" value="1"/>
</dbReference>
<dbReference type="Pfam" id="PF00043">
    <property type="entry name" value="GST_C"/>
    <property type="match status" value="1"/>
</dbReference>
<dbReference type="Pfam" id="PF02798">
    <property type="entry name" value="GST_N"/>
    <property type="match status" value="1"/>
</dbReference>
<dbReference type="SFLD" id="SFLDG01152">
    <property type="entry name" value="Main.3:_Omega-_and_Tau-like"/>
    <property type="match status" value="1"/>
</dbReference>
<dbReference type="SFLD" id="SFLDG00358">
    <property type="entry name" value="Main_(cytGST)"/>
    <property type="match status" value="1"/>
</dbReference>
<dbReference type="SUPFAM" id="SSF47616">
    <property type="entry name" value="GST C-terminal domain-like"/>
    <property type="match status" value="1"/>
</dbReference>
<dbReference type="SUPFAM" id="SSF52833">
    <property type="entry name" value="Thioredoxin-like"/>
    <property type="match status" value="1"/>
</dbReference>
<dbReference type="PROSITE" id="PS50405">
    <property type="entry name" value="GST_CTER"/>
    <property type="match status" value="1"/>
</dbReference>
<dbReference type="PROSITE" id="PS50404">
    <property type="entry name" value="GST_NTER"/>
    <property type="match status" value="1"/>
</dbReference>
<sequence>MAEVKLLGLRYSPFSHRVEWALKIKGVKYEFIEEDLQNKSPLLLQSNPIHKKIPVLIHNGKCICESMVILEYIDEAFEGPSILPKDPYDRALARFWAKYVEDKGAAVWKSFFSKGEEQEKAKEEAYEMLKILDNEFKDKKCFVGDKFGFADIVANGAALYLGILEEVSGIVLATSEKFPNFCAWRDEYCTQNEEYFPSRDELLIRYRAYIQPVDASK</sequence>
<accession>P32111</accession>
<protein>
    <recommendedName>
        <fullName>Probable glutathione S-transferase</fullName>
        <ecNumber>2.5.1.18</ecNumber>
    </recommendedName>
    <alternativeName>
        <fullName>Pathogenesis-related protein 1</fullName>
    </alternativeName>
</protein>